<comment type="function">
    <text evidence="1">Peptide chain release factor 1 directs the termination of translation in response to the peptide chain termination codons UAG and UAA.</text>
</comment>
<comment type="subcellular location">
    <subcellularLocation>
        <location evidence="1">Cytoplasm</location>
    </subcellularLocation>
</comment>
<comment type="PTM">
    <text evidence="1">Methylated by PrmC. Methylation increases the termination efficiency of RF1.</text>
</comment>
<comment type="similarity">
    <text evidence="1">Belongs to the prokaryotic/mitochondrial release factor family.</text>
</comment>
<accession>Q3AMQ9</accession>
<keyword id="KW-0963">Cytoplasm</keyword>
<keyword id="KW-0488">Methylation</keyword>
<keyword id="KW-0648">Protein biosynthesis</keyword>
<gene>
    <name evidence="1" type="primary">prfA</name>
    <name type="ordered locus">Syncc9605_0347</name>
</gene>
<dbReference type="EMBL" id="CP000110">
    <property type="protein sequence ID" value="ABB34123.1"/>
    <property type="molecule type" value="Genomic_DNA"/>
</dbReference>
<dbReference type="RefSeq" id="WP_011363371.1">
    <property type="nucleotide sequence ID" value="NC_007516.1"/>
</dbReference>
<dbReference type="SMR" id="Q3AMQ9"/>
<dbReference type="STRING" id="110662.Syncc9605_0347"/>
<dbReference type="KEGG" id="syd:Syncc9605_0347"/>
<dbReference type="eggNOG" id="COG0216">
    <property type="taxonomic scope" value="Bacteria"/>
</dbReference>
<dbReference type="HOGENOM" id="CLU_036856_0_1_3"/>
<dbReference type="OrthoDB" id="9806673at2"/>
<dbReference type="GO" id="GO:0005737">
    <property type="term" value="C:cytoplasm"/>
    <property type="evidence" value="ECO:0007669"/>
    <property type="project" value="UniProtKB-SubCell"/>
</dbReference>
<dbReference type="GO" id="GO:0016149">
    <property type="term" value="F:translation release factor activity, codon specific"/>
    <property type="evidence" value="ECO:0007669"/>
    <property type="project" value="UniProtKB-UniRule"/>
</dbReference>
<dbReference type="FunFam" id="3.30.160.20:FF:000004">
    <property type="entry name" value="Peptide chain release factor 1"/>
    <property type="match status" value="1"/>
</dbReference>
<dbReference type="FunFam" id="3.30.70.1660:FF:000002">
    <property type="entry name" value="Peptide chain release factor 1"/>
    <property type="match status" value="1"/>
</dbReference>
<dbReference type="Gene3D" id="3.30.160.20">
    <property type="match status" value="1"/>
</dbReference>
<dbReference type="Gene3D" id="3.30.70.1660">
    <property type="match status" value="2"/>
</dbReference>
<dbReference type="Gene3D" id="6.10.140.1950">
    <property type="match status" value="1"/>
</dbReference>
<dbReference type="HAMAP" id="MF_00093">
    <property type="entry name" value="Rel_fac_1"/>
    <property type="match status" value="1"/>
</dbReference>
<dbReference type="InterPro" id="IPR005139">
    <property type="entry name" value="PCRF"/>
</dbReference>
<dbReference type="InterPro" id="IPR000352">
    <property type="entry name" value="Pep_chain_release_fac_I"/>
</dbReference>
<dbReference type="InterPro" id="IPR045853">
    <property type="entry name" value="Pep_chain_release_fac_I_sf"/>
</dbReference>
<dbReference type="InterPro" id="IPR050057">
    <property type="entry name" value="Prokaryotic/Mito_RF"/>
</dbReference>
<dbReference type="InterPro" id="IPR004373">
    <property type="entry name" value="RF-1"/>
</dbReference>
<dbReference type="NCBIfam" id="TIGR00019">
    <property type="entry name" value="prfA"/>
    <property type="match status" value="1"/>
</dbReference>
<dbReference type="NCBIfam" id="NF001859">
    <property type="entry name" value="PRK00591.1"/>
    <property type="match status" value="1"/>
</dbReference>
<dbReference type="PANTHER" id="PTHR43804">
    <property type="entry name" value="LD18447P"/>
    <property type="match status" value="1"/>
</dbReference>
<dbReference type="PANTHER" id="PTHR43804:SF8">
    <property type="entry name" value="PEPTIDE CHAIN RELEASE FACTOR APG3, CHLOROPLASTIC"/>
    <property type="match status" value="1"/>
</dbReference>
<dbReference type="Pfam" id="PF03462">
    <property type="entry name" value="PCRF"/>
    <property type="match status" value="1"/>
</dbReference>
<dbReference type="Pfam" id="PF00472">
    <property type="entry name" value="RF-1"/>
    <property type="match status" value="1"/>
</dbReference>
<dbReference type="SMART" id="SM00937">
    <property type="entry name" value="PCRF"/>
    <property type="match status" value="1"/>
</dbReference>
<dbReference type="SUPFAM" id="SSF75620">
    <property type="entry name" value="Release factor"/>
    <property type="match status" value="1"/>
</dbReference>
<dbReference type="PROSITE" id="PS00745">
    <property type="entry name" value="RF_PROK_I"/>
    <property type="match status" value="1"/>
</dbReference>
<feature type="chain" id="PRO_0000263374" description="Peptide chain release factor 1">
    <location>
        <begin position="1"/>
        <end position="365"/>
    </location>
</feature>
<feature type="region of interest" description="Disordered" evidence="2">
    <location>
        <begin position="289"/>
        <end position="316"/>
    </location>
</feature>
<feature type="modified residue" description="N5-methylglutamine" evidence="1">
    <location>
        <position position="239"/>
    </location>
</feature>
<reference key="1">
    <citation type="submission" date="2005-07" db="EMBL/GenBank/DDBJ databases">
        <title>Complete sequence of Synechococcus sp. CC9605.</title>
        <authorList>
            <consortium name="US DOE Joint Genome Institute"/>
            <person name="Copeland A."/>
            <person name="Lucas S."/>
            <person name="Lapidus A."/>
            <person name="Barry K."/>
            <person name="Detter J.C."/>
            <person name="Glavina T."/>
            <person name="Hammon N."/>
            <person name="Israni S."/>
            <person name="Pitluck S."/>
            <person name="Schmutz J."/>
            <person name="Martinez M."/>
            <person name="Larimer F."/>
            <person name="Land M."/>
            <person name="Kyrpides N."/>
            <person name="Ivanova N."/>
            <person name="Richardson P."/>
        </authorList>
    </citation>
    <scope>NUCLEOTIDE SEQUENCE [LARGE SCALE GENOMIC DNA]</scope>
    <source>
        <strain>CC9605</strain>
    </source>
</reference>
<name>RF1_SYNSC</name>
<protein>
    <recommendedName>
        <fullName evidence="1">Peptide chain release factor 1</fullName>
        <shortName evidence="1">RF-1</shortName>
    </recommendedName>
</protein>
<sequence length="365" mass="40699">MDASTLFTRLETATASFRNLERQLADPDVAADPKRLESIARERSRLEPLVLDFEELQRLESERDSARQLLKDSRGDAAMEELAQDELASLQEQHATLTERLTLALLPRDPRDERSVMLEIRAGAGGDEACLWAGDLARMYERYSQKVGWAVQSISCTEADLGGFRELILSVRGDSVYSQLKFEAGVHRVQRVPATESQGRVHTSTATVAVMPEADAVEVQLDPKDLDISTARSGGAGGQNVNKVETAVDLLHKPTGIRVFCTQERSQLQNRERALEILRAKLLEREQAAAAERESSDRRAQVGSGDRSEKIRTYNYKDNRTTDHRLGRNFTLEPVLEGQLEDLIGACIAEEQRQKLEALSDQAEA</sequence>
<evidence type="ECO:0000255" key="1">
    <source>
        <dbReference type="HAMAP-Rule" id="MF_00093"/>
    </source>
</evidence>
<evidence type="ECO:0000256" key="2">
    <source>
        <dbReference type="SAM" id="MobiDB-lite"/>
    </source>
</evidence>
<organism>
    <name type="scientific">Synechococcus sp. (strain CC9605)</name>
    <dbReference type="NCBI Taxonomy" id="110662"/>
    <lineage>
        <taxon>Bacteria</taxon>
        <taxon>Bacillati</taxon>
        <taxon>Cyanobacteriota</taxon>
        <taxon>Cyanophyceae</taxon>
        <taxon>Synechococcales</taxon>
        <taxon>Synechococcaceae</taxon>
        <taxon>Synechococcus</taxon>
    </lineage>
</organism>
<proteinExistence type="inferred from homology"/>